<evidence type="ECO:0000255" key="1">
    <source>
        <dbReference type="HAMAP-Rule" id="MF_00149"/>
    </source>
</evidence>
<evidence type="ECO:0000256" key="2">
    <source>
        <dbReference type="SAM" id="MobiDB-lite"/>
    </source>
</evidence>
<dbReference type="EMBL" id="AE016879">
    <property type="protein sequence ID" value="AAP27637.1"/>
    <property type="molecule type" value="Genomic_DNA"/>
</dbReference>
<dbReference type="EMBL" id="AE017334">
    <property type="protein sequence ID" value="AAT33017.1"/>
    <property type="molecule type" value="Genomic_DNA"/>
</dbReference>
<dbReference type="EMBL" id="AE017225">
    <property type="protein sequence ID" value="AAT55921.1"/>
    <property type="molecule type" value="Genomic_DNA"/>
</dbReference>
<dbReference type="RefSeq" id="NP_846151.1">
    <property type="nucleotide sequence ID" value="NC_003997.3"/>
</dbReference>
<dbReference type="RefSeq" id="WP_000516478.1">
    <property type="nucleotide sequence ID" value="NZ_WXXJ01000001.1"/>
</dbReference>
<dbReference type="RefSeq" id="YP_029870.1">
    <property type="nucleotide sequence ID" value="NC_005945.1"/>
</dbReference>
<dbReference type="SMR" id="Q81WR4"/>
<dbReference type="IntAct" id="Q81WR4">
    <property type="interactions" value="8"/>
</dbReference>
<dbReference type="STRING" id="261594.GBAA_3904"/>
<dbReference type="DNASU" id="1085120"/>
<dbReference type="GeneID" id="45023597"/>
<dbReference type="KEGG" id="ban:BA_3904"/>
<dbReference type="KEGG" id="bar:GBAA_3904"/>
<dbReference type="KEGG" id="bat:BAS3617"/>
<dbReference type="PATRIC" id="fig|198094.11.peg.3874"/>
<dbReference type="eggNOG" id="COG0323">
    <property type="taxonomic scope" value="Bacteria"/>
</dbReference>
<dbReference type="HOGENOM" id="CLU_004131_4_1_9"/>
<dbReference type="OMA" id="AHERIMY"/>
<dbReference type="OrthoDB" id="9763467at2"/>
<dbReference type="Proteomes" id="UP000000427">
    <property type="component" value="Chromosome"/>
</dbReference>
<dbReference type="Proteomes" id="UP000000594">
    <property type="component" value="Chromosome"/>
</dbReference>
<dbReference type="GO" id="GO:0032300">
    <property type="term" value="C:mismatch repair complex"/>
    <property type="evidence" value="ECO:0007669"/>
    <property type="project" value="InterPro"/>
</dbReference>
<dbReference type="GO" id="GO:0005524">
    <property type="term" value="F:ATP binding"/>
    <property type="evidence" value="ECO:0007669"/>
    <property type="project" value="InterPro"/>
</dbReference>
<dbReference type="GO" id="GO:0016887">
    <property type="term" value="F:ATP hydrolysis activity"/>
    <property type="evidence" value="ECO:0007669"/>
    <property type="project" value="InterPro"/>
</dbReference>
<dbReference type="GO" id="GO:0140664">
    <property type="term" value="F:ATP-dependent DNA damage sensor activity"/>
    <property type="evidence" value="ECO:0007669"/>
    <property type="project" value="InterPro"/>
</dbReference>
<dbReference type="GO" id="GO:0030983">
    <property type="term" value="F:mismatched DNA binding"/>
    <property type="evidence" value="ECO:0007669"/>
    <property type="project" value="InterPro"/>
</dbReference>
<dbReference type="GO" id="GO:0006298">
    <property type="term" value="P:mismatch repair"/>
    <property type="evidence" value="ECO:0007669"/>
    <property type="project" value="UniProtKB-UniRule"/>
</dbReference>
<dbReference type="CDD" id="cd16926">
    <property type="entry name" value="HATPase_MutL-MLH-PMS-like"/>
    <property type="match status" value="1"/>
</dbReference>
<dbReference type="CDD" id="cd00782">
    <property type="entry name" value="MutL_Trans"/>
    <property type="match status" value="1"/>
</dbReference>
<dbReference type="FunFam" id="3.30.1370.100:FF:000004">
    <property type="entry name" value="DNA mismatch repair endonuclease MutL"/>
    <property type="match status" value="1"/>
</dbReference>
<dbReference type="FunFam" id="3.30.230.10:FF:000036">
    <property type="entry name" value="DNA mismatch repair endonuclease MutL"/>
    <property type="match status" value="1"/>
</dbReference>
<dbReference type="FunFam" id="3.30.565.10:FF:000003">
    <property type="entry name" value="DNA mismatch repair endonuclease MutL"/>
    <property type="match status" value="1"/>
</dbReference>
<dbReference type="Gene3D" id="3.30.230.10">
    <property type="match status" value="1"/>
</dbReference>
<dbReference type="Gene3D" id="3.30.565.10">
    <property type="entry name" value="Histidine kinase-like ATPase, C-terminal domain"/>
    <property type="match status" value="1"/>
</dbReference>
<dbReference type="Gene3D" id="3.30.1540.20">
    <property type="entry name" value="MutL, C-terminal domain, dimerisation subdomain"/>
    <property type="match status" value="1"/>
</dbReference>
<dbReference type="Gene3D" id="3.30.1370.100">
    <property type="entry name" value="MutL, C-terminal domain, regulatory subdomain"/>
    <property type="match status" value="1"/>
</dbReference>
<dbReference type="HAMAP" id="MF_00149">
    <property type="entry name" value="DNA_mis_repair"/>
    <property type="match status" value="1"/>
</dbReference>
<dbReference type="InterPro" id="IPR014762">
    <property type="entry name" value="DNA_mismatch_repair_CS"/>
</dbReference>
<dbReference type="InterPro" id="IPR020667">
    <property type="entry name" value="DNA_mismatch_repair_MutL"/>
</dbReference>
<dbReference type="InterPro" id="IPR013507">
    <property type="entry name" value="DNA_mismatch_S5_2-like"/>
</dbReference>
<dbReference type="InterPro" id="IPR036890">
    <property type="entry name" value="HATPase_C_sf"/>
</dbReference>
<dbReference type="InterPro" id="IPR002099">
    <property type="entry name" value="MutL/Mlh/PMS"/>
</dbReference>
<dbReference type="InterPro" id="IPR038973">
    <property type="entry name" value="MutL/Mlh/Pms-like"/>
</dbReference>
<dbReference type="InterPro" id="IPR014790">
    <property type="entry name" value="MutL_C"/>
</dbReference>
<dbReference type="InterPro" id="IPR042120">
    <property type="entry name" value="MutL_C_dimsub"/>
</dbReference>
<dbReference type="InterPro" id="IPR042121">
    <property type="entry name" value="MutL_C_regsub"/>
</dbReference>
<dbReference type="InterPro" id="IPR037198">
    <property type="entry name" value="MutL_C_sf"/>
</dbReference>
<dbReference type="InterPro" id="IPR020568">
    <property type="entry name" value="Ribosomal_Su5_D2-typ_SF"/>
</dbReference>
<dbReference type="InterPro" id="IPR014721">
    <property type="entry name" value="Ribsml_uS5_D2-typ_fold_subgr"/>
</dbReference>
<dbReference type="NCBIfam" id="TIGR00585">
    <property type="entry name" value="mutl"/>
    <property type="match status" value="1"/>
</dbReference>
<dbReference type="NCBIfam" id="NF000950">
    <property type="entry name" value="PRK00095.1-3"/>
    <property type="match status" value="1"/>
</dbReference>
<dbReference type="PANTHER" id="PTHR10073">
    <property type="entry name" value="DNA MISMATCH REPAIR PROTEIN MLH, PMS, MUTL"/>
    <property type="match status" value="1"/>
</dbReference>
<dbReference type="PANTHER" id="PTHR10073:SF12">
    <property type="entry name" value="DNA MISMATCH REPAIR PROTEIN MLH1"/>
    <property type="match status" value="1"/>
</dbReference>
<dbReference type="Pfam" id="PF01119">
    <property type="entry name" value="DNA_mis_repair"/>
    <property type="match status" value="1"/>
</dbReference>
<dbReference type="Pfam" id="PF13589">
    <property type="entry name" value="HATPase_c_3"/>
    <property type="match status" value="1"/>
</dbReference>
<dbReference type="Pfam" id="PF08676">
    <property type="entry name" value="MutL_C"/>
    <property type="match status" value="1"/>
</dbReference>
<dbReference type="SMART" id="SM01340">
    <property type="entry name" value="DNA_mis_repair"/>
    <property type="match status" value="1"/>
</dbReference>
<dbReference type="SMART" id="SM00853">
    <property type="entry name" value="MutL_C"/>
    <property type="match status" value="1"/>
</dbReference>
<dbReference type="SUPFAM" id="SSF55874">
    <property type="entry name" value="ATPase domain of HSP90 chaperone/DNA topoisomerase II/histidine kinase"/>
    <property type="match status" value="1"/>
</dbReference>
<dbReference type="SUPFAM" id="SSF118116">
    <property type="entry name" value="DNA mismatch repair protein MutL"/>
    <property type="match status" value="1"/>
</dbReference>
<dbReference type="SUPFAM" id="SSF54211">
    <property type="entry name" value="Ribosomal protein S5 domain 2-like"/>
    <property type="match status" value="1"/>
</dbReference>
<dbReference type="PROSITE" id="PS00058">
    <property type="entry name" value="DNA_MISMATCH_REPAIR_1"/>
    <property type="match status" value="1"/>
</dbReference>
<proteinExistence type="inferred from homology"/>
<comment type="function">
    <text evidence="1">This protein is involved in the repair of mismatches in DNA. It is required for dam-dependent methyl-directed DNA mismatch repair. May act as a 'molecular matchmaker', a protein that promotes the formation of a stable complex between two or more DNA-binding proteins in an ATP-dependent manner without itself being part of a final effector complex.</text>
</comment>
<comment type="similarity">
    <text evidence="1">Belongs to the DNA mismatch repair MutL/HexB family.</text>
</comment>
<name>MUTL_BACAN</name>
<protein>
    <recommendedName>
        <fullName evidence="1">DNA mismatch repair protein MutL</fullName>
    </recommendedName>
</protein>
<keyword id="KW-0227">DNA damage</keyword>
<keyword id="KW-0234">DNA repair</keyword>
<keyword id="KW-1185">Reference proteome</keyword>
<reference key="1">
    <citation type="journal article" date="2003" name="Nature">
        <title>The genome sequence of Bacillus anthracis Ames and comparison to closely related bacteria.</title>
        <authorList>
            <person name="Read T.D."/>
            <person name="Peterson S.N."/>
            <person name="Tourasse N.J."/>
            <person name="Baillie L.W."/>
            <person name="Paulsen I.T."/>
            <person name="Nelson K.E."/>
            <person name="Tettelin H."/>
            <person name="Fouts D.E."/>
            <person name="Eisen J.A."/>
            <person name="Gill S.R."/>
            <person name="Holtzapple E.K."/>
            <person name="Okstad O.A."/>
            <person name="Helgason E."/>
            <person name="Rilstone J."/>
            <person name="Wu M."/>
            <person name="Kolonay J.F."/>
            <person name="Beanan M.J."/>
            <person name="Dodson R.J."/>
            <person name="Brinkac L.M."/>
            <person name="Gwinn M.L."/>
            <person name="DeBoy R.T."/>
            <person name="Madpu R."/>
            <person name="Daugherty S.C."/>
            <person name="Durkin A.S."/>
            <person name="Haft D.H."/>
            <person name="Nelson W.C."/>
            <person name="Peterson J.D."/>
            <person name="Pop M."/>
            <person name="Khouri H.M."/>
            <person name="Radune D."/>
            <person name="Benton J.L."/>
            <person name="Mahamoud Y."/>
            <person name="Jiang L."/>
            <person name="Hance I.R."/>
            <person name="Weidman J.F."/>
            <person name="Berry K.J."/>
            <person name="Plaut R.D."/>
            <person name="Wolf A.M."/>
            <person name="Watkins K.L."/>
            <person name="Nierman W.C."/>
            <person name="Hazen A."/>
            <person name="Cline R.T."/>
            <person name="Redmond C."/>
            <person name="Thwaite J.E."/>
            <person name="White O."/>
            <person name="Salzberg S.L."/>
            <person name="Thomason B."/>
            <person name="Friedlander A.M."/>
            <person name="Koehler T.M."/>
            <person name="Hanna P.C."/>
            <person name="Kolstoe A.-B."/>
            <person name="Fraser C.M."/>
        </authorList>
    </citation>
    <scope>NUCLEOTIDE SEQUENCE [LARGE SCALE GENOMIC DNA]</scope>
    <source>
        <strain>Ames / isolate Porton</strain>
    </source>
</reference>
<reference key="2">
    <citation type="submission" date="2004-01" db="EMBL/GenBank/DDBJ databases">
        <title>Complete genome sequence of Bacillus anthracis Sterne.</title>
        <authorList>
            <person name="Brettin T.S."/>
            <person name="Bruce D."/>
            <person name="Challacombe J.F."/>
            <person name="Gilna P."/>
            <person name="Han C."/>
            <person name="Hill K."/>
            <person name="Hitchcock P."/>
            <person name="Jackson P."/>
            <person name="Keim P."/>
            <person name="Longmire J."/>
            <person name="Lucas S."/>
            <person name="Okinaka R."/>
            <person name="Richardson P."/>
            <person name="Rubin E."/>
            <person name="Tice H."/>
        </authorList>
    </citation>
    <scope>NUCLEOTIDE SEQUENCE [LARGE SCALE GENOMIC DNA]</scope>
    <source>
        <strain>Sterne</strain>
    </source>
</reference>
<reference key="3">
    <citation type="journal article" date="2009" name="J. Bacteriol.">
        <title>The complete genome sequence of Bacillus anthracis Ames 'Ancestor'.</title>
        <authorList>
            <person name="Ravel J."/>
            <person name="Jiang L."/>
            <person name="Stanley S.T."/>
            <person name="Wilson M.R."/>
            <person name="Decker R.S."/>
            <person name="Read T.D."/>
            <person name="Worsham P."/>
            <person name="Keim P.S."/>
            <person name="Salzberg S.L."/>
            <person name="Fraser-Liggett C.M."/>
            <person name="Rasko D.A."/>
        </authorList>
    </citation>
    <scope>NUCLEOTIDE SEQUENCE [LARGE SCALE GENOMIC DNA]</scope>
    <source>
        <strain>Ames ancestor</strain>
    </source>
</reference>
<feature type="chain" id="PRO_1000009977" description="DNA mismatch repair protein MutL">
    <location>
        <begin position="1"/>
        <end position="626"/>
    </location>
</feature>
<feature type="region of interest" description="Disordered" evidence="2">
    <location>
        <begin position="377"/>
        <end position="413"/>
    </location>
</feature>
<feature type="compositionally biased region" description="Polar residues" evidence="2">
    <location>
        <begin position="383"/>
        <end position="393"/>
    </location>
</feature>
<organism>
    <name type="scientific">Bacillus anthracis</name>
    <dbReference type="NCBI Taxonomy" id="1392"/>
    <lineage>
        <taxon>Bacteria</taxon>
        <taxon>Bacillati</taxon>
        <taxon>Bacillota</taxon>
        <taxon>Bacilli</taxon>
        <taxon>Bacillales</taxon>
        <taxon>Bacillaceae</taxon>
        <taxon>Bacillus</taxon>
        <taxon>Bacillus cereus group</taxon>
    </lineage>
</organism>
<accession>Q81WR4</accession>
<accession>Q6HUW8</accession>
<accession>Q6KP44</accession>
<gene>
    <name evidence="1" type="primary">mutL</name>
    <name type="ordered locus">BA_3904</name>
    <name type="ordered locus">GBAA_3904</name>
    <name type="ordered locus">BAS3617</name>
</gene>
<sequence>MGKIRKLDDQLSNLIAAGEVVERPASVVKELVENSIDANSTSIEIHLEEAGLSKIRIIDNGDGIAEEDCIVAFERHATSKIKDENDLFRIRTLGFRGEALPSIASVSELELITSTGDAPGTHLIIKGGDIIKQEKTASRKGTDITVQNLFFNTPARLKYMKTIHTELGNITDIVYRIAMSHPEVSLKLFHNEKKLLHTSGNGDVRQVLASIYSIQVAKKLVPIEAESLDFTIKGYVTLPEVTRASRNYMSTIVNGRYVRNFVLMKAIQQGYHTLLPVGRYPIGFLSIEMDPMLVDVNVHPAKLEVRFSKEQELLKLIEETLQAAFKKIQLIPDAGVTTKKKEKDESVQEQFQFEHAKPKEPSMPEIVLPTGMDEKQEEPQAVKQPTQLWQPSTKPIIEEPIQEEKSWDSNEEGFELEELEEVREIKEIEMNGNDLPPLYPIGQMHGTYIFAQNDKGLYMIDQHAAQERINYEYFRDKVGRVAQEVQELLVPYRIDLSLTEFLRVEEQLEELKKVGLFLEQFGHQSFIVRSHPTWFPKGQETEIIDEMMEQVVKLKKVDIKKLREEAAIMMSCKASIKANQYLTNDQIFALLEELRTTTNPYTCPHGRPILVHHSTYELEKMFKRVM</sequence>